<evidence type="ECO:0000250" key="1">
    <source>
        <dbReference type="UniProtKB" id="Q1XH05"/>
    </source>
</evidence>
<evidence type="ECO:0000250" key="2">
    <source>
        <dbReference type="UniProtKB" id="Q9SPP9"/>
    </source>
</evidence>
<evidence type="ECO:0000255" key="3"/>
<evidence type="ECO:0000255" key="4">
    <source>
        <dbReference type="PROSITE-ProRule" id="PRU00498"/>
    </source>
</evidence>
<evidence type="ECO:0000269" key="5">
    <source>
    </source>
</evidence>
<evidence type="ECO:0000269" key="6">
    <source>
    </source>
</evidence>
<evidence type="ECO:0000269" key="7">
    <source>
    </source>
</evidence>
<evidence type="ECO:0000303" key="8">
    <source>
    </source>
</evidence>
<evidence type="ECO:0000305" key="9"/>
<evidence type="ECO:0000305" key="10">
    <source>
    </source>
</evidence>
<evidence type="ECO:0000305" key="11">
    <source>
    </source>
</evidence>
<evidence type="ECO:0000312" key="12">
    <source>
        <dbReference type="EMBL" id="ABF94615.1"/>
    </source>
</evidence>
<evidence type="ECO:0000312" key="13">
    <source>
        <dbReference type="EMBL" id="BAF11272.1"/>
    </source>
</evidence>
<evidence type="ECO:0007744" key="14">
    <source>
        <dbReference type="PDB" id="3GNO"/>
    </source>
</evidence>
<evidence type="ECO:0007744" key="15">
    <source>
        <dbReference type="PDB" id="3GNP"/>
    </source>
</evidence>
<evidence type="ECO:0007744" key="16">
    <source>
        <dbReference type="PDB" id="3GNR"/>
    </source>
</evidence>
<evidence type="ECO:0007744" key="17">
    <source>
        <dbReference type="PDB" id="3WBA"/>
    </source>
</evidence>
<evidence type="ECO:0007744" key="18">
    <source>
        <dbReference type="PDB" id="3WBE"/>
    </source>
</evidence>
<evidence type="ECO:0007829" key="19">
    <source>
        <dbReference type="PDB" id="3GNP"/>
    </source>
</evidence>
<evidence type="ECO:0007829" key="20">
    <source>
        <dbReference type="PDB" id="3GNR"/>
    </source>
</evidence>
<organism>
    <name type="scientific">Oryza sativa subsp. japonica</name>
    <name type="common">Rice</name>
    <dbReference type="NCBI Taxonomy" id="39947"/>
    <lineage>
        <taxon>Eukaryota</taxon>
        <taxon>Viridiplantae</taxon>
        <taxon>Streptophyta</taxon>
        <taxon>Embryophyta</taxon>
        <taxon>Tracheophyta</taxon>
        <taxon>Spermatophyta</taxon>
        <taxon>Magnoliopsida</taxon>
        <taxon>Liliopsida</taxon>
        <taxon>Poales</taxon>
        <taxon>Poaceae</taxon>
        <taxon>BOP clade</taxon>
        <taxon>Oryzoideae</taxon>
        <taxon>Oryzeae</taxon>
        <taxon>Oryzinae</taxon>
        <taxon>Oryza</taxon>
        <taxon>Oryza sativa</taxon>
    </lineage>
</organism>
<protein>
    <recommendedName>
        <fullName evidence="9">Beta-glucosidase 6</fullName>
        <shortName evidence="8">Os3bglu6</shortName>
        <ecNumber evidence="5">3.2.1.21</ecNumber>
    </recommendedName>
</protein>
<keyword id="KW-0002">3D-structure</keyword>
<keyword id="KW-1015">Disulfide bond</keyword>
<keyword id="KW-0325">Glycoprotein</keyword>
<keyword id="KW-0326">Glycosidase</keyword>
<keyword id="KW-0378">Hydrolase</keyword>
<keyword id="KW-1185">Reference proteome</keyword>
<keyword id="KW-0964">Secreted</keyword>
<keyword id="KW-0732">Signal</keyword>
<name>BGL06_ORYSJ</name>
<dbReference type="EC" id="3.2.1.21" evidence="5"/>
<dbReference type="EMBL" id="AY129294">
    <property type="protein sequence ID" value="AAN01354.1"/>
    <property type="molecule type" value="mRNA"/>
</dbReference>
<dbReference type="EMBL" id="DP000009">
    <property type="protein sequence ID" value="ABF94615.1"/>
    <property type="molecule type" value="Genomic_DNA"/>
</dbReference>
<dbReference type="EMBL" id="AP008209">
    <property type="protein sequence ID" value="BAF11272.1"/>
    <property type="molecule type" value="Genomic_DNA"/>
</dbReference>
<dbReference type="EMBL" id="AP014959">
    <property type="protein sequence ID" value="BAS82933.1"/>
    <property type="molecule type" value="Genomic_DNA"/>
</dbReference>
<dbReference type="EMBL" id="AK119546">
    <property type="protein sequence ID" value="BAG99682.1"/>
    <property type="molecule type" value="mRNA"/>
</dbReference>
<dbReference type="RefSeq" id="XP_015628023.1">
    <property type="nucleotide sequence ID" value="XM_015772537.1"/>
</dbReference>
<dbReference type="PDB" id="3GNO">
    <property type="method" value="X-ray"/>
    <property type="resolution" value="1.83 A"/>
    <property type="chains" value="A=38-521"/>
</dbReference>
<dbReference type="PDB" id="3GNP">
    <property type="method" value="X-ray"/>
    <property type="resolution" value="1.80 A"/>
    <property type="chains" value="A=38-521"/>
</dbReference>
<dbReference type="PDB" id="3GNR">
    <property type="method" value="X-ray"/>
    <property type="resolution" value="1.81 A"/>
    <property type="chains" value="A=38-521"/>
</dbReference>
<dbReference type="PDB" id="3WBA">
    <property type="method" value="X-ray"/>
    <property type="resolution" value="1.90 A"/>
    <property type="chains" value="A=38-521"/>
</dbReference>
<dbReference type="PDB" id="3WBE">
    <property type="method" value="X-ray"/>
    <property type="resolution" value="1.97 A"/>
    <property type="chains" value="A=38-521"/>
</dbReference>
<dbReference type="PDBsum" id="3GNO"/>
<dbReference type="PDBsum" id="3GNP"/>
<dbReference type="PDBsum" id="3GNR"/>
<dbReference type="PDBsum" id="3WBA"/>
<dbReference type="PDBsum" id="3WBE"/>
<dbReference type="SMR" id="Q8L7J2"/>
<dbReference type="FunCoup" id="Q8L7J2">
    <property type="interactions" value="641"/>
</dbReference>
<dbReference type="STRING" id="39947.Q8L7J2"/>
<dbReference type="CAZy" id="GH1">
    <property type="family name" value="Glycoside Hydrolase Family 1"/>
</dbReference>
<dbReference type="GlyCosmos" id="Q8L7J2">
    <property type="glycosylation" value="3 sites, No reported glycans"/>
</dbReference>
<dbReference type="PaxDb" id="39947-Q8L7J2"/>
<dbReference type="EnsemblPlants" id="Os03t0212800-01">
    <property type="protein sequence ID" value="Os03t0212800-01"/>
    <property type="gene ID" value="Os03g0212800"/>
</dbReference>
<dbReference type="Gramene" id="Os03t0212800-01">
    <property type="protein sequence ID" value="Os03t0212800-01"/>
    <property type="gene ID" value="Os03g0212800"/>
</dbReference>
<dbReference type="KEGG" id="dosa:Os03g0212800"/>
<dbReference type="eggNOG" id="KOG0626">
    <property type="taxonomic scope" value="Eukaryota"/>
</dbReference>
<dbReference type="HOGENOM" id="CLU_001859_1_0_1"/>
<dbReference type="InParanoid" id="Q8L7J2"/>
<dbReference type="OMA" id="YGGWGSR"/>
<dbReference type="OrthoDB" id="65569at2759"/>
<dbReference type="BRENDA" id="3.2.1.21">
    <property type="organism ID" value="4460"/>
</dbReference>
<dbReference type="SABIO-RK" id="Q8L7J2"/>
<dbReference type="EvolutionaryTrace" id="Q8L7J2"/>
<dbReference type="Proteomes" id="UP000000763">
    <property type="component" value="Chromosome 3"/>
</dbReference>
<dbReference type="Proteomes" id="UP000059680">
    <property type="component" value="Chromosome 3"/>
</dbReference>
<dbReference type="GO" id="GO:0005576">
    <property type="term" value="C:extracellular region"/>
    <property type="evidence" value="ECO:0007669"/>
    <property type="project" value="UniProtKB-SubCell"/>
</dbReference>
<dbReference type="GO" id="GO:0033907">
    <property type="term" value="F:beta-D-fucosidase activity"/>
    <property type="evidence" value="ECO:0000314"/>
    <property type="project" value="UniProtKB"/>
</dbReference>
<dbReference type="GO" id="GO:0004565">
    <property type="term" value="F:beta-galactosidase activity"/>
    <property type="evidence" value="ECO:0000314"/>
    <property type="project" value="UniProtKB"/>
</dbReference>
<dbReference type="GO" id="GO:0080083">
    <property type="term" value="F:beta-gentiobiose beta-glucosidase activity"/>
    <property type="evidence" value="ECO:0000314"/>
    <property type="project" value="UniProtKB"/>
</dbReference>
<dbReference type="GO" id="GO:0008422">
    <property type="term" value="F:beta-glucosidase activity"/>
    <property type="evidence" value="ECO:0000314"/>
    <property type="project" value="UniProtKB"/>
</dbReference>
<dbReference type="GO" id="GO:0080079">
    <property type="term" value="F:cellobiose glucosidase activity"/>
    <property type="evidence" value="ECO:0000314"/>
    <property type="project" value="UniProtKB"/>
</dbReference>
<dbReference type="GO" id="GO:0042973">
    <property type="term" value="F:glucan endo-1,3-beta-D-glucosidase activity"/>
    <property type="evidence" value="ECO:0000314"/>
    <property type="project" value="UniProtKB"/>
</dbReference>
<dbReference type="GO" id="GO:0016798">
    <property type="term" value="F:hydrolase activity, acting on glycosyl bonds"/>
    <property type="evidence" value="ECO:0000314"/>
    <property type="project" value="UniProtKB"/>
</dbReference>
<dbReference type="GO" id="GO:0005975">
    <property type="term" value="P:carbohydrate metabolic process"/>
    <property type="evidence" value="ECO:0007669"/>
    <property type="project" value="InterPro"/>
</dbReference>
<dbReference type="FunFam" id="3.20.20.80:FF:000020">
    <property type="entry name" value="Beta-glucosidase 12"/>
    <property type="match status" value="1"/>
</dbReference>
<dbReference type="Gene3D" id="3.20.20.80">
    <property type="entry name" value="Glycosidases"/>
    <property type="match status" value="1"/>
</dbReference>
<dbReference type="InterPro" id="IPR001360">
    <property type="entry name" value="Glyco_hydro_1"/>
</dbReference>
<dbReference type="InterPro" id="IPR033132">
    <property type="entry name" value="Glyco_hydro_1_N_CS"/>
</dbReference>
<dbReference type="InterPro" id="IPR017853">
    <property type="entry name" value="Glycoside_hydrolase_SF"/>
</dbReference>
<dbReference type="PANTHER" id="PTHR10353:SF313">
    <property type="entry name" value="BETA-GLUCOSIDASE 6"/>
    <property type="match status" value="1"/>
</dbReference>
<dbReference type="PANTHER" id="PTHR10353">
    <property type="entry name" value="GLYCOSYL HYDROLASE"/>
    <property type="match status" value="1"/>
</dbReference>
<dbReference type="Pfam" id="PF00232">
    <property type="entry name" value="Glyco_hydro_1"/>
    <property type="match status" value="1"/>
</dbReference>
<dbReference type="PRINTS" id="PR00131">
    <property type="entry name" value="GLHYDRLASE1"/>
</dbReference>
<dbReference type="SUPFAM" id="SSF51445">
    <property type="entry name" value="(Trans)glycosidases"/>
    <property type="match status" value="1"/>
</dbReference>
<dbReference type="PROSITE" id="PS00653">
    <property type="entry name" value="GLYCOSYL_HYDROL_F1_2"/>
    <property type="match status" value="1"/>
</dbReference>
<gene>
    <name evidence="9" type="primary">BGLU6</name>
    <name evidence="13" type="ordered locus">Os03g0212800</name>
    <name evidence="12" type="ordered locus">LOC_Os03g11420</name>
</gene>
<feature type="signal peptide" evidence="3">
    <location>
        <begin position="1"/>
        <end position="38"/>
    </location>
</feature>
<feature type="chain" id="PRO_0000387495" description="Beta-glucosidase 6">
    <location>
        <begin position="39"/>
        <end position="521"/>
    </location>
</feature>
<feature type="active site" description="Proton donor" evidence="7">
    <location>
        <position position="211"/>
    </location>
</feature>
<feature type="active site" description="Nucleophile" evidence="7">
    <location>
        <position position="427"/>
    </location>
</feature>
<feature type="binding site" evidence="10 11 15 17">
    <location>
        <position position="64"/>
    </location>
    <ligand>
        <name>a beta-D-glucoside</name>
        <dbReference type="ChEBI" id="CHEBI:22798"/>
    </ligand>
</feature>
<feature type="binding site" evidence="11 17">
    <location>
        <position position="165"/>
    </location>
    <ligand>
        <name>a beta-D-glucoside</name>
        <dbReference type="ChEBI" id="CHEBI:22798"/>
    </ligand>
</feature>
<feature type="binding site" evidence="10 11 15 17">
    <location>
        <begin position="210"/>
        <end position="211"/>
    </location>
    <ligand>
        <name>a beta-D-glucoside</name>
        <dbReference type="ChEBI" id="CHEBI:22798"/>
    </ligand>
</feature>
<feature type="binding site" evidence="10 11 15 17">
    <location>
        <position position="354"/>
    </location>
    <ligand>
        <name>a beta-D-glucoside</name>
        <dbReference type="ChEBI" id="CHEBI:22798"/>
    </ligand>
</feature>
<feature type="binding site" evidence="2">
    <location>
        <position position="427"/>
    </location>
    <ligand>
        <name>a beta-D-glucoside</name>
        <dbReference type="ChEBI" id="CHEBI:22798"/>
    </ligand>
</feature>
<feature type="binding site" evidence="10 11 15 17">
    <location>
        <position position="477"/>
    </location>
    <ligand>
        <name>a beta-D-glucoside</name>
        <dbReference type="ChEBI" id="CHEBI:22798"/>
    </ligand>
</feature>
<feature type="binding site" evidence="10 11 15 17">
    <location>
        <begin position="484"/>
        <end position="485"/>
    </location>
    <ligand>
        <name>a beta-D-glucoside</name>
        <dbReference type="ChEBI" id="CHEBI:22798"/>
    </ligand>
</feature>
<feature type="binding site" evidence="1">
    <location>
        <position position="493"/>
    </location>
    <ligand>
        <name>a beta-D-glucoside</name>
        <dbReference type="ChEBI" id="CHEBI:22798"/>
    </ligand>
</feature>
<feature type="glycosylation site" description="N-linked (GlcNAc...) asparagine" evidence="4">
    <location>
        <position position="291"/>
    </location>
</feature>
<feature type="glycosylation site" description="N-linked (GlcNAc...) asparagine" evidence="4">
    <location>
        <position position="362"/>
    </location>
</feature>
<feature type="glycosylation site" description="N-linked (GlcNAc...) asparagine" evidence="4">
    <location>
        <position position="372"/>
    </location>
</feature>
<feature type="disulfide bond" evidence="5 7 14 15 16 17 18">
    <location>
        <begin position="230"/>
        <end position="238"/>
    </location>
</feature>
<feature type="mutagenesis site" description="Decreases activity toward gibberellin A4 beta-D-glucosyl ester 5-fold." evidence="7">
    <original>E</original>
    <variation>A</variation>
    <location>
        <position position="211"/>
    </location>
</feature>
<feature type="mutagenesis site" description="Decreases activity toward gibberellin A4 beta-D-glucosyl ester 10-fold." evidence="7">
    <original>E</original>
    <variation>Q</variation>
    <location>
        <position position="211"/>
    </location>
</feature>
<feature type="mutagenesis site" description="Decreases the kcat/Km values 7 to 30-fold depending on the substrate." evidence="6">
    <original>M</original>
    <variation>N</variation>
    <location>
        <position position="284"/>
    </location>
</feature>
<feature type="mutagenesis site" description="Decreases activity toward gibberellin A4 beta-D-glucosyl ester 70-fold." evidence="7">
    <original>E</original>
    <variation>D</variation>
    <location>
        <position position="427"/>
    </location>
</feature>
<feature type="mutagenesis site" description="Decreases activity toward gibberellin A4 beta-D-glucosyl ester 200-fold." evidence="7">
    <original>E</original>
    <variation>Q</variation>
    <location>
        <position position="427"/>
    </location>
</feature>
<feature type="helix" evidence="19">
    <location>
        <begin position="47"/>
        <end position="49"/>
    </location>
</feature>
<feature type="strand" evidence="19">
    <location>
        <begin position="55"/>
        <end position="59"/>
    </location>
</feature>
<feature type="helix" evidence="19">
    <location>
        <begin position="62"/>
        <end position="65"/>
    </location>
</feature>
<feature type="helix" evidence="19">
    <location>
        <begin position="71"/>
        <end position="73"/>
    </location>
</feature>
<feature type="helix" evidence="19">
    <location>
        <begin position="78"/>
        <end position="83"/>
    </location>
</feature>
<feature type="helix" evidence="19">
    <location>
        <begin position="101"/>
        <end position="115"/>
    </location>
</feature>
<feature type="strand" evidence="19">
    <location>
        <begin position="119"/>
        <end position="123"/>
    </location>
</feature>
<feature type="helix" evidence="19">
    <location>
        <begin position="126"/>
        <end position="129"/>
    </location>
</feature>
<feature type="strand" evidence="19">
    <location>
        <begin position="133"/>
        <end position="136"/>
    </location>
</feature>
<feature type="helix" evidence="19">
    <location>
        <begin position="139"/>
        <end position="154"/>
    </location>
</feature>
<feature type="strand" evidence="19">
    <location>
        <begin position="158"/>
        <end position="166"/>
    </location>
</feature>
<feature type="helix" evidence="19">
    <location>
        <begin position="170"/>
        <end position="176"/>
    </location>
</feature>
<feature type="helix" evidence="19">
    <location>
        <begin position="178"/>
        <end position="180"/>
    </location>
</feature>
<feature type="helix" evidence="19">
    <location>
        <begin position="183"/>
        <end position="199"/>
    </location>
</feature>
<feature type="turn" evidence="19">
    <location>
        <begin position="200"/>
        <end position="202"/>
    </location>
</feature>
<feature type="strand" evidence="19">
    <location>
        <begin position="205"/>
        <end position="210"/>
    </location>
</feature>
<feature type="helix" evidence="19">
    <location>
        <begin position="212"/>
        <end position="220"/>
    </location>
</feature>
<feature type="turn" evidence="19">
    <location>
        <begin position="232"/>
        <end position="234"/>
    </location>
</feature>
<feature type="turn" evidence="19">
    <location>
        <begin position="243"/>
        <end position="245"/>
    </location>
</feature>
<feature type="helix" evidence="19">
    <location>
        <begin position="246"/>
        <end position="268"/>
    </location>
</feature>
<feature type="helix" evidence="19">
    <location>
        <begin position="270"/>
        <end position="273"/>
    </location>
</feature>
<feature type="strand" evidence="19">
    <location>
        <begin position="276"/>
        <end position="282"/>
    </location>
</feature>
<feature type="strand" evidence="19">
    <location>
        <begin position="285"/>
        <end position="292"/>
    </location>
</feature>
<feature type="helix" evidence="19">
    <location>
        <begin position="293"/>
        <end position="306"/>
    </location>
</feature>
<feature type="helix" evidence="19">
    <location>
        <begin position="308"/>
        <end position="316"/>
    </location>
</feature>
<feature type="helix" evidence="19">
    <location>
        <begin position="321"/>
        <end position="327"/>
    </location>
</feature>
<feature type="helix" evidence="19">
    <location>
        <begin position="328"/>
        <end position="330"/>
    </location>
</feature>
<feature type="helix" evidence="19">
    <location>
        <begin position="336"/>
        <end position="342"/>
    </location>
</feature>
<feature type="strand" evidence="19">
    <location>
        <begin position="347"/>
        <end position="352"/>
    </location>
</feature>
<feature type="strand" evidence="19">
    <location>
        <begin position="356"/>
        <end position="361"/>
    </location>
</feature>
<feature type="strand" evidence="20">
    <location>
        <begin position="366"/>
        <end position="368"/>
    </location>
</feature>
<feature type="helix" evidence="19">
    <location>
        <begin position="369"/>
        <end position="371"/>
    </location>
</feature>
<feature type="helix" evidence="19">
    <location>
        <begin position="374"/>
        <end position="377"/>
    </location>
</feature>
<feature type="strand" evidence="19">
    <location>
        <begin position="380"/>
        <end position="386"/>
    </location>
</feature>
<feature type="strand" evidence="19">
    <location>
        <begin position="389"/>
        <end position="392"/>
    </location>
</feature>
<feature type="helix" evidence="19">
    <location>
        <begin position="405"/>
        <end position="418"/>
    </location>
</feature>
<feature type="strand" evidence="19">
    <location>
        <begin position="423"/>
        <end position="428"/>
    </location>
</feature>
<feature type="helix" evidence="19">
    <location>
        <begin position="440"/>
        <end position="443"/>
    </location>
</feature>
<feature type="helix" evidence="19">
    <location>
        <begin position="447"/>
        <end position="465"/>
    </location>
</feature>
<feature type="strand" evidence="19">
    <location>
        <begin position="471"/>
        <end position="477"/>
    </location>
</feature>
<feature type="helix" evidence="19">
    <location>
        <begin position="485"/>
        <end position="490"/>
    </location>
</feature>
<feature type="strand" evidence="19">
    <location>
        <begin position="495"/>
        <end position="498"/>
    </location>
</feature>
<feature type="turn" evidence="19">
    <location>
        <begin position="500"/>
        <end position="504"/>
    </location>
</feature>
<feature type="strand" evidence="19">
    <location>
        <begin position="506"/>
        <end position="508"/>
    </location>
</feature>
<feature type="helix" evidence="19">
    <location>
        <begin position="510"/>
        <end position="519"/>
    </location>
</feature>
<accession>Q8L7J2</accession>
<accession>A0A0P0VUN5</accession>
<reference key="1">
    <citation type="journal article" date="2009" name="Plant Physiol.">
        <title>Structural and enzymatic characterization of Os3BGlu6, a rice beta-glucosidase hydrolyzing hydrophobic glycosides and (1-&gt;3)- and (1-&gt;2)-linked disaccharides.</title>
        <authorList>
            <person name="Seshadri S."/>
            <person name="Akiyama T."/>
            <person name="Opassiri R."/>
            <person name="Kuaprasert B."/>
            <person name="Cairns J.K."/>
        </authorList>
    </citation>
    <scope>NUCLEOTIDE SEQUENCE [MRNA]</scope>
    <scope>X-RAY CRYSTALLOGRAPHY (1.8 ANGSTROMS) OF 38-521 IN COMPLEX WITH SUBSTRATE ANALOG</scope>
    <scope>FUNCTION</scope>
    <scope>CATALYTIC ACTIVITY</scope>
    <scope>BIOPHYSICOCHEMICAL PROPERTIES</scope>
    <scope>DISULFIDE BOND</scope>
    <source>
        <strain>cv. Yukihikari</strain>
    </source>
</reference>
<reference key="2">
    <citation type="journal article" date="2005" name="Genome Res.">
        <title>Sequence, annotation, and analysis of synteny between rice chromosome 3 and diverged grass species.</title>
        <authorList>
            <consortium name="The rice chromosome 3 sequencing consortium"/>
            <person name="Buell C.R."/>
            <person name="Yuan Q."/>
            <person name="Ouyang S."/>
            <person name="Liu J."/>
            <person name="Zhu W."/>
            <person name="Wang A."/>
            <person name="Maiti R."/>
            <person name="Haas B."/>
            <person name="Wortman J."/>
            <person name="Pertea M."/>
            <person name="Jones K.M."/>
            <person name="Kim M."/>
            <person name="Overton L."/>
            <person name="Tsitrin T."/>
            <person name="Fadrosh D."/>
            <person name="Bera J."/>
            <person name="Weaver B."/>
            <person name="Jin S."/>
            <person name="Johri S."/>
            <person name="Reardon M."/>
            <person name="Webb K."/>
            <person name="Hill J."/>
            <person name="Moffat K."/>
            <person name="Tallon L."/>
            <person name="Van Aken S."/>
            <person name="Lewis M."/>
            <person name="Utterback T."/>
            <person name="Feldblyum T."/>
            <person name="Zismann V."/>
            <person name="Iobst S."/>
            <person name="Hsiao J."/>
            <person name="de Vazeille A.R."/>
            <person name="Salzberg S.L."/>
            <person name="White O."/>
            <person name="Fraser C.M."/>
            <person name="Yu Y."/>
            <person name="Kim H."/>
            <person name="Rambo T."/>
            <person name="Currie J."/>
            <person name="Collura K."/>
            <person name="Kernodle-Thompson S."/>
            <person name="Wei F."/>
            <person name="Kudrna K."/>
            <person name="Ammiraju J.S.S."/>
            <person name="Luo M."/>
            <person name="Goicoechea J.L."/>
            <person name="Wing R.A."/>
            <person name="Henry D."/>
            <person name="Oates R."/>
            <person name="Palmer M."/>
            <person name="Pries G."/>
            <person name="Saski C."/>
            <person name="Simmons J."/>
            <person name="Soderlund C."/>
            <person name="Nelson W."/>
            <person name="de la Bastide M."/>
            <person name="Spiegel L."/>
            <person name="Nascimento L."/>
            <person name="Huang E."/>
            <person name="Preston R."/>
            <person name="Zutavern T."/>
            <person name="Palmer L."/>
            <person name="O'Shaughnessy A."/>
            <person name="Dike S."/>
            <person name="McCombie W.R."/>
            <person name="Minx P."/>
            <person name="Cordum H."/>
            <person name="Wilson R."/>
            <person name="Jin W."/>
            <person name="Lee H.R."/>
            <person name="Jiang J."/>
            <person name="Jackson S."/>
        </authorList>
    </citation>
    <scope>NUCLEOTIDE SEQUENCE [LARGE SCALE GENOMIC DNA]</scope>
    <source>
        <strain>cv. Nipponbare</strain>
    </source>
</reference>
<reference key="3">
    <citation type="journal article" date="2005" name="Nature">
        <title>The map-based sequence of the rice genome.</title>
        <authorList>
            <consortium name="International rice genome sequencing project (IRGSP)"/>
        </authorList>
    </citation>
    <scope>NUCLEOTIDE SEQUENCE [LARGE SCALE GENOMIC DNA]</scope>
    <source>
        <strain>cv. Nipponbare</strain>
    </source>
</reference>
<reference key="4">
    <citation type="journal article" date="2008" name="Nucleic Acids Res.">
        <title>The rice annotation project database (RAP-DB): 2008 update.</title>
        <authorList>
            <consortium name="The rice annotation project (RAP)"/>
        </authorList>
    </citation>
    <scope>GENOME REANNOTATION</scope>
    <source>
        <strain>cv. Nipponbare</strain>
    </source>
</reference>
<reference key="5">
    <citation type="journal article" date="2013" name="Rice">
        <title>Improvement of the Oryza sativa Nipponbare reference genome using next generation sequence and optical map data.</title>
        <authorList>
            <person name="Kawahara Y."/>
            <person name="de la Bastide M."/>
            <person name="Hamilton J.P."/>
            <person name="Kanamori H."/>
            <person name="McCombie W.R."/>
            <person name="Ouyang S."/>
            <person name="Schwartz D.C."/>
            <person name="Tanaka T."/>
            <person name="Wu J."/>
            <person name="Zhou S."/>
            <person name="Childs K.L."/>
            <person name="Davidson R.M."/>
            <person name="Lin H."/>
            <person name="Quesada-Ocampo L."/>
            <person name="Vaillancourt B."/>
            <person name="Sakai H."/>
            <person name="Lee S.S."/>
            <person name="Kim J."/>
            <person name="Numa H."/>
            <person name="Itoh T."/>
            <person name="Buell C.R."/>
            <person name="Matsumoto T."/>
        </authorList>
    </citation>
    <scope>GENOME REANNOTATION</scope>
    <source>
        <strain>cv. Nipponbare</strain>
    </source>
</reference>
<reference key="6">
    <citation type="journal article" date="2003" name="Science">
        <title>Collection, mapping, and annotation of over 28,000 cDNA clones from japonica rice.</title>
        <authorList>
            <consortium name="The rice full-length cDNA consortium"/>
        </authorList>
    </citation>
    <scope>NUCLEOTIDE SEQUENCE [LARGE SCALE MRNA]</scope>
    <source>
        <strain>cv. Nipponbare</strain>
    </source>
</reference>
<reference key="7">
    <citation type="journal article" date="2006" name="BMC Plant Biol.">
        <title>Analysis of rice glycosyl hydrolase family 1 and expression of Os4bglu12 beta-glucosidase.</title>
        <authorList>
            <person name="Opassiri R."/>
            <person name="Pomthong B."/>
            <person name="Onkoksoong T."/>
            <person name="Akiyama T."/>
            <person name="Esen A."/>
            <person name="Ketudat Cairns J.R."/>
        </authorList>
    </citation>
    <scope>GENE FAMILY</scope>
    <scope>NOMENCLATURE</scope>
</reference>
<reference key="8">
    <citation type="journal article" date="2012" name="Carbohydr. Res.">
        <title>Exchanging a single amino acid residue generates or weakens a +2 cellooligosaccharide binding subsite in rice beta-glucosidases.</title>
        <authorList>
            <person name="Sansenya S."/>
            <person name="Maneesan J."/>
            <person name="Cairns J.R."/>
        </authorList>
    </citation>
    <scope>MUTAGENESIS OF MET-284</scope>
</reference>
<reference key="9">
    <citation type="journal article" date="2013" name="Arch. Biochem. Biophys.">
        <title>Enzymatic and structural characterization of hydrolysis of gibberellin A4 glucosyl ester by a rice beta-D-glucosidase.</title>
        <authorList>
            <person name="Hua Y."/>
            <person name="Sansenya S."/>
            <person name="Saetang C."/>
            <person name="Wakuta S."/>
            <person name="Ketudat Cairns J.R."/>
        </authorList>
    </citation>
    <scope>X-RAY CRYSTALLOGRAPHY (1.90 ANGSTROMS) OF 38-521 IN COMPLEX WITH GLUCOSE</scope>
    <scope>FUNCTION</scope>
    <scope>ACTIVE SITE</scope>
    <scope>BIOPHYSICOCHEMICAL PROPERTIES</scope>
    <scope>DISULFIDE BOND</scope>
    <scope>MUTAGENESIS OF GLU-211 AND GLU-427</scope>
</reference>
<comment type="function">
    <text evidence="5 7">Hydrolyzes glycosides, oligosaccharides and hydrophobic glycosides (PubMed:19587102). Possesses gibberellin ester beta-D-glucosidase activity. Can hydrolyze gibberellin A4 beta-D-glucosyl ester in vitro (PubMed:23811195).</text>
</comment>
<comment type="catalytic activity">
    <reaction evidence="5">
        <text>Hydrolysis of terminal, non-reducing beta-D-glucosyl residues with release of beta-D-glucose.</text>
        <dbReference type="EC" id="3.2.1.21"/>
    </reaction>
</comment>
<comment type="biophysicochemical properties">
    <kinetics>
        <KM evidence="5">6.3 mM for p-nitrophenyl beta-D-glucoside (at pH 5.0)</KM>
        <KM evidence="5">0.5 mM for p-nitrophenyl beta-D-fucoside (at pH 5.0)</KM>
        <KM evidence="5">6.06 mM for p-nitrophenyl beta-D-galactoside (at pH 5.0)</KM>
        <KM evidence="5">4.5 mM for n-octyl-beta-D-glucoside (at pH 5.0)</KM>
        <KM evidence="5">5 mM for n-heptyl-beta-D-glucoside (at pH 5.0)</KM>
        <KM evidence="5">3.6 mM for laminaribiose (at pH 5.0)</KM>
        <KM evidence="5">8.7 mM for laminaritriose (at pH 5.0)</KM>
        <KM evidence="5">15.3 mM for cellobiose (at pH 5.0)</KM>
        <KM evidence="5">9.8 mM for sophorose (at pH 5.0)</KM>
        <KM evidence="5">14.9 mM for gentiobiose (at pH 5.0)</KM>
    </kinetics>
    <phDependence>
        <text evidence="7">Optimum pH is 4.5.</text>
    </phDependence>
</comment>
<comment type="subunit">
    <text evidence="9">Homodimer.</text>
</comment>
<comment type="subcellular location">
    <subcellularLocation>
        <location evidence="9">Secreted</location>
    </subcellularLocation>
</comment>
<comment type="similarity">
    <text evidence="9">Belongs to the glycosyl hydrolase 1 family.</text>
</comment>
<proteinExistence type="evidence at protein level"/>
<sequence>MGRIKSSSGRCSTARLEAVAVLVVVFGVASSSLRGCIAQQSGGGLTRGSFPEGFVFGTASAAYQYEGAVKEDGRGQTIWDTFAHTFGKITDFSNADVAVDQYHRFEEDIQLMADMGMDAYRFSIAWSRIYPNGVGQVNQAGIDHYNKLIDALLAKGIQPYVTLYHWDLPQALEDKYKGWLDRQIVDDFAAYAETCFREFGDRVKHWITLNEPHTVAIQGYDAGLQAPGRCSVLLHLYCKAGNSGTEPYVVAHHFILAHAAAASIYRTKYKATQNGQLGIAFDVMWFEPMSNTTIDIEAAKRAQEFQLGWFADPFFFGDYPATMRARVGERLPRFTADEAAVVKGALDFVGINHYTTYYTRHNNTNIIGTLLNNTLADTGTVSLPFKNGKPIGDRANSIWLYIVPRGMRSLMNYVKERYNSPPVYITENGMDDSNNPFISIKDALKDSKRIKYHNDYLTNLAASIKEDGCDVRGYFAWSLLDNWEWAAGYSSRFGLYFVDYKDNLKRYPKNSVQWFKALLKT</sequence>